<dbReference type="EC" id="2.4.2.17" evidence="1"/>
<dbReference type="EMBL" id="CP000029">
    <property type="protein sequence ID" value="AAW53203.1"/>
    <property type="molecule type" value="Genomic_DNA"/>
</dbReference>
<dbReference type="RefSeq" id="WP_002470286.1">
    <property type="nucleotide sequence ID" value="NC_002976.3"/>
</dbReference>
<dbReference type="SMR" id="Q5HKN7"/>
<dbReference type="STRING" id="176279.SERP2306"/>
<dbReference type="KEGG" id="ser:SERP2306"/>
<dbReference type="eggNOG" id="COG0040">
    <property type="taxonomic scope" value="Bacteria"/>
</dbReference>
<dbReference type="HOGENOM" id="CLU_038115_2_0_9"/>
<dbReference type="UniPathway" id="UPA00031">
    <property type="reaction ID" value="UER00006"/>
</dbReference>
<dbReference type="Proteomes" id="UP000000531">
    <property type="component" value="Chromosome"/>
</dbReference>
<dbReference type="GO" id="GO:0005737">
    <property type="term" value="C:cytoplasm"/>
    <property type="evidence" value="ECO:0007669"/>
    <property type="project" value="UniProtKB-SubCell"/>
</dbReference>
<dbReference type="GO" id="GO:0005524">
    <property type="term" value="F:ATP binding"/>
    <property type="evidence" value="ECO:0007669"/>
    <property type="project" value="UniProtKB-KW"/>
</dbReference>
<dbReference type="GO" id="GO:0003879">
    <property type="term" value="F:ATP phosphoribosyltransferase activity"/>
    <property type="evidence" value="ECO:0007669"/>
    <property type="project" value="UniProtKB-UniRule"/>
</dbReference>
<dbReference type="GO" id="GO:0000105">
    <property type="term" value="P:L-histidine biosynthetic process"/>
    <property type="evidence" value="ECO:0007669"/>
    <property type="project" value="UniProtKB-UniRule"/>
</dbReference>
<dbReference type="CDD" id="cd13595">
    <property type="entry name" value="PBP2_HisGs"/>
    <property type="match status" value="1"/>
</dbReference>
<dbReference type="FunFam" id="3.40.190.10:FF:000008">
    <property type="entry name" value="ATP phosphoribosyltransferase"/>
    <property type="match status" value="1"/>
</dbReference>
<dbReference type="Gene3D" id="3.40.190.10">
    <property type="entry name" value="Periplasmic binding protein-like II"/>
    <property type="match status" value="2"/>
</dbReference>
<dbReference type="HAMAP" id="MF_01018">
    <property type="entry name" value="HisG_Short"/>
    <property type="match status" value="1"/>
</dbReference>
<dbReference type="InterPro" id="IPR013820">
    <property type="entry name" value="ATP_PRibTrfase_cat"/>
</dbReference>
<dbReference type="InterPro" id="IPR001348">
    <property type="entry name" value="ATP_PRibTrfase_HisG"/>
</dbReference>
<dbReference type="InterPro" id="IPR024893">
    <property type="entry name" value="ATP_PRibTrfase_HisG_short"/>
</dbReference>
<dbReference type="NCBIfam" id="TIGR00070">
    <property type="entry name" value="hisG"/>
    <property type="match status" value="1"/>
</dbReference>
<dbReference type="PANTHER" id="PTHR21403:SF8">
    <property type="entry name" value="ATP PHOSPHORIBOSYLTRANSFERASE"/>
    <property type="match status" value="1"/>
</dbReference>
<dbReference type="PANTHER" id="PTHR21403">
    <property type="entry name" value="ATP PHOSPHORIBOSYLTRANSFERASE ATP-PRTASE"/>
    <property type="match status" value="1"/>
</dbReference>
<dbReference type="Pfam" id="PF01634">
    <property type="entry name" value="HisG"/>
    <property type="match status" value="1"/>
</dbReference>
<dbReference type="SUPFAM" id="SSF53850">
    <property type="entry name" value="Periplasmic binding protein-like II"/>
    <property type="match status" value="1"/>
</dbReference>
<reference key="1">
    <citation type="journal article" date="2005" name="J. Bacteriol.">
        <title>Insights on evolution of virulence and resistance from the complete genome analysis of an early methicillin-resistant Staphylococcus aureus strain and a biofilm-producing methicillin-resistant Staphylococcus epidermidis strain.</title>
        <authorList>
            <person name="Gill S.R."/>
            <person name="Fouts D.E."/>
            <person name="Archer G.L."/>
            <person name="Mongodin E.F."/>
            <person name="DeBoy R.T."/>
            <person name="Ravel J."/>
            <person name="Paulsen I.T."/>
            <person name="Kolonay J.F."/>
            <person name="Brinkac L.M."/>
            <person name="Beanan M.J."/>
            <person name="Dodson R.J."/>
            <person name="Daugherty S.C."/>
            <person name="Madupu R."/>
            <person name="Angiuoli S.V."/>
            <person name="Durkin A.S."/>
            <person name="Haft D.H."/>
            <person name="Vamathevan J.J."/>
            <person name="Khouri H."/>
            <person name="Utterback T.R."/>
            <person name="Lee C."/>
            <person name="Dimitrov G."/>
            <person name="Jiang L."/>
            <person name="Qin H."/>
            <person name="Weidman J."/>
            <person name="Tran K."/>
            <person name="Kang K.H."/>
            <person name="Hance I.R."/>
            <person name="Nelson K.E."/>
            <person name="Fraser C.M."/>
        </authorList>
    </citation>
    <scope>NUCLEOTIDE SEQUENCE [LARGE SCALE GENOMIC DNA]</scope>
    <source>
        <strain>ATCC 35984 / DSM 28319 / BCRC 17069 / CCUG 31568 / BM 3577 / RP62A</strain>
    </source>
</reference>
<comment type="function">
    <text evidence="1">Catalyzes the condensation of ATP and 5-phosphoribose 1-diphosphate to form N'-(5'-phosphoribosyl)-ATP (PR-ATP). Has a crucial role in the pathway because the rate of histidine biosynthesis seems to be controlled primarily by regulation of HisG enzymatic activity.</text>
</comment>
<comment type="catalytic activity">
    <reaction evidence="1">
        <text>1-(5-phospho-beta-D-ribosyl)-ATP + diphosphate = 5-phospho-alpha-D-ribose 1-diphosphate + ATP</text>
        <dbReference type="Rhea" id="RHEA:18473"/>
        <dbReference type="ChEBI" id="CHEBI:30616"/>
        <dbReference type="ChEBI" id="CHEBI:33019"/>
        <dbReference type="ChEBI" id="CHEBI:58017"/>
        <dbReference type="ChEBI" id="CHEBI:73183"/>
        <dbReference type="EC" id="2.4.2.17"/>
    </reaction>
</comment>
<comment type="pathway">
    <text evidence="1">Amino-acid biosynthesis; L-histidine biosynthesis; L-histidine from 5-phospho-alpha-D-ribose 1-diphosphate: step 1/9.</text>
</comment>
<comment type="subunit">
    <text evidence="1">Heteromultimer composed of HisG and HisZ subunits.</text>
</comment>
<comment type="subcellular location">
    <subcellularLocation>
        <location evidence="1">Cytoplasm</location>
    </subcellularLocation>
</comment>
<comment type="domain">
    <text>Lacks the C-terminal regulatory region which is replaced by HisZ.</text>
</comment>
<comment type="similarity">
    <text evidence="1">Belongs to the ATP phosphoribosyltransferase family. Short subfamily.</text>
</comment>
<name>HIS1_STAEQ</name>
<sequence length="204" mass="22655">MLRVALAKGRLLKSFIEYLQQVNQIDIATVLLNRQRQLLLTVDNIEMILVKGSDVPTYVEQGIADVGIVGSDILNGQKYNINKLLDLPFGKCHFALAAKPETSRYKKVATSYVHTATQFFNKEGMDVEVIHLNGSVELSCVVDMVDAIVDIVQTGSTLTANGLVEKKHISEINAKLITNKESYFKQSSEIERLIKQLGVSINYA</sequence>
<keyword id="KW-0028">Amino-acid biosynthesis</keyword>
<keyword id="KW-0067">ATP-binding</keyword>
<keyword id="KW-0963">Cytoplasm</keyword>
<keyword id="KW-0328">Glycosyltransferase</keyword>
<keyword id="KW-0368">Histidine biosynthesis</keyword>
<keyword id="KW-0547">Nucleotide-binding</keyword>
<keyword id="KW-1185">Reference proteome</keyword>
<keyword id="KW-0808">Transferase</keyword>
<gene>
    <name evidence="1" type="primary">hisG</name>
    <name type="ordered locus">SERP2306</name>
</gene>
<evidence type="ECO:0000255" key="1">
    <source>
        <dbReference type="HAMAP-Rule" id="MF_01018"/>
    </source>
</evidence>
<protein>
    <recommendedName>
        <fullName evidence="1">ATP phosphoribosyltransferase</fullName>
        <shortName evidence="1">ATP-PRT</shortName>
        <shortName evidence="1">ATP-PRTase</shortName>
        <ecNumber evidence="1">2.4.2.17</ecNumber>
    </recommendedName>
</protein>
<proteinExistence type="inferred from homology"/>
<accession>Q5HKN7</accession>
<feature type="chain" id="PRO_0000151938" description="ATP phosphoribosyltransferase">
    <location>
        <begin position="1"/>
        <end position="204"/>
    </location>
</feature>
<organism>
    <name type="scientific">Staphylococcus epidermidis (strain ATCC 35984 / DSM 28319 / BCRC 17069 / CCUG 31568 / BM 3577 / RP62A)</name>
    <dbReference type="NCBI Taxonomy" id="176279"/>
    <lineage>
        <taxon>Bacteria</taxon>
        <taxon>Bacillati</taxon>
        <taxon>Bacillota</taxon>
        <taxon>Bacilli</taxon>
        <taxon>Bacillales</taxon>
        <taxon>Staphylococcaceae</taxon>
        <taxon>Staphylococcus</taxon>
    </lineage>
</organism>